<sequence>MSGEHLQVVHGDITRMEVDAIVNAANSGLLGGGGVDGAIHGAGGSAIKEACRAIRDTQGGCPTGEAVITTGGHLPAPYVIHAVGPVWQGGDQGEDELLANAYRNSIRLAAQHHLRRLAFPNISTGIYAFPRERAADIAIAAVREALAAAPEIEQVTFVCFDDENYRLYRERLS</sequence>
<reference key="1">
    <citation type="journal article" date="1995" name="Eur. J. Biochem.">
        <title>Metabolic pathway for biosynthesis of poly(3-hydroxybutyrate-co-4-hydroxybutyrate) from 4-hydroxybutyrate by Alcaligenes eutrophus.</title>
        <authorList>
            <person name="Valentin H.E."/>
            <person name="Zwingmann G."/>
            <person name="Schoenebaum A."/>
            <person name="Steinbuechel A."/>
        </authorList>
    </citation>
    <scope>NUCLEOTIDE SEQUENCE [GENOMIC DNA]</scope>
    <source>
        <strain>H16 / SK4040</strain>
    </source>
</reference>
<feature type="chain" id="PRO_0000089187" description="Macro domain-containing protein in gbd 3'region">
    <location>
        <begin position="1"/>
        <end position="173"/>
    </location>
</feature>
<feature type="domain" description="Macro" evidence="1">
    <location>
        <begin position="1"/>
        <end position="173"/>
    </location>
</feature>
<protein>
    <recommendedName>
        <fullName>Macro domain-containing protein in gbd 3'region</fullName>
    </recommendedName>
    <alternativeName>
        <fullName>ORF2</fullName>
    </alternativeName>
</protein>
<organism>
    <name type="scientific">Cupriavidus necator</name>
    <name type="common">Alcaligenes eutrophus</name>
    <name type="synonym">Ralstonia eutropha</name>
    <dbReference type="NCBI Taxonomy" id="106590"/>
    <lineage>
        <taxon>Bacteria</taxon>
        <taxon>Pseudomonadati</taxon>
        <taxon>Pseudomonadota</taxon>
        <taxon>Betaproteobacteria</taxon>
        <taxon>Burkholderiales</taxon>
        <taxon>Burkholderiaceae</taxon>
        <taxon>Cupriavidus</taxon>
    </lineage>
</organism>
<accession>Q44020</accession>
<comment type="similarity">
    <text evidence="2">Belongs to the MacroD-type family.</text>
</comment>
<proteinExistence type="inferred from homology"/>
<evidence type="ECO:0000255" key="1">
    <source>
        <dbReference type="PROSITE-ProRule" id="PRU00490"/>
    </source>
</evidence>
<evidence type="ECO:0000305" key="2"/>
<dbReference type="EMBL" id="L36817">
    <property type="protein sequence ID" value="AAC41426.1"/>
    <property type="molecule type" value="Genomic_DNA"/>
</dbReference>
<dbReference type="PIR" id="I39569">
    <property type="entry name" value="I39569"/>
</dbReference>
<dbReference type="RefSeq" id="WP_010810020.1">
    <property type="nucleotide sequence ID" value="NZ_LVWN01000023.1"/>
</dbReference>
<dbReference type="SMR" id="Q44020"/>
<dbReference type="CDD" id="cd02908">
    <property type="entry name" value="Macro_OAADPr_deacetylase"/>
    <property type="match status" value="1"/>
</dbReference>
<dbReference type="Gene3D" id="3.40.220.10">
    <property type="entry name" value="Leucine Aminopeptidase, subunit E, domain 1"/>
    <property type="match status" value="1"/>
</dbReference>
<dbReference type="InterPro" id="IPR002589">
    <property type="entry name" value="Macro_dom"/>
</dbReference>
<dbReference type="InterPro" id="IPR043472">
    <property type="entry name" value="Macro_dom-like"/>
</dbReference>
<dbReference type="NCBIfam" id="NF001664">
    <property type="entry name" value="PRK00431.1-6"/>
    <property type="match status" value="1"/>
</dbReference>
<dbReference type="PANTHER" id="PTHR11106">
    <property type="entry name" value="GANGLIOSIDE INDUCED DIFFERENTIATION ASSOCIATED PROTEIN 2-RELATED"/>
    <property type="match status" value="1"/>
</dbReference>
<dbReference type="PANTHER" id="PTHR11106:SF27">
    <property type="entry name" value="MACRO DOMAIN-CONTAINING PROTEIN"/>
    <property type="match status" value="1"/>
</dbReference>
<dbReference type="Pfam" id="PF01661">
    <property type="entry name" value="Macro"/>
    <property type="match status" value="1"/>
</dbReference>
<dbReference type="SMART" id="SM00506">
    <property type="entry name" value="A1pp"/>
    <property type="match status" value="1"/>
</dbReference>
<dbReference type="SUPFAM" id="SSF52949">
    <property type="entry name" value="Macro domain-like"/>
    <property type="match status" value="1"/>
</dbReference>
<dbReference type="PROSITE" id="PS51154">
    <property type="entry name" value="MACRO"/>
    <property type="match status" value="1"/>
</dbReference>
<name>YGB2_CUPNE</name>